<sequence length="179" mass="19493">MSRIGKQPIPVPAGVDITIDGQNVLVKGPKGTLDLTVAEPIMLARNDEGAIVVTRPDNERRNRSLHGLSRTLVSNLVTGVTQGYTVSMEIFGVGYRAQLKGSNLEFALGYSHPVVIEAPEGITFAVQSPTKFTITGIDKQKVGQISANIRRLRRPDPYKGKGVRYEGEQIRRKVGKTGK</sequence>
<gene>
    <name evidence="1" type="primary">rplF</name>
    <name type="ordered locus">ML1844</name>
    <name type="ORF">MLCB2492.19</name>
</gene>
<dbReference type="EMBL" id="Z98756">
    <property type="protein sequence ID" value="CAB11451.1"/>
    <property type="molecule type" value="Genomic_DNA"/>
</dbReference>
<dbReference type="EMBL" id="AL583923">
    <property type="protein sequence ID" value="CAC30798.1"/>
    <property type="molecule type" value="Genomic_DNA"/>
</dbReference>
<dbReference type="PIR" id="T45381">
    <property type="entry name" value="T45381"/>
</dbReference>
<dbReference type="RefSeq" id="NP_302250.1">
    <property type="nucleotide sequence ID" value="NC_002677.1"/>
</dbReference>
<dbReference type="RefSeq" id="WP_010908571.1">
    <property type="nucleotide sequence ID" value="NC_002677.1"/>
</dbReference>
<dbReference type="SMR" id="O32998"/>
<dbReference type="STRING" id="272631.gene:17575692"/>
<dbReference type="KEGG" id="mle:ML1844"/>
<dbReference type="PATRIC" id="fig|272631.5.peg.3494"/>
<dbReference type="Leproma" id="ML1844"/>
<dbReference type="eggNOG" id="COG0097">
    <property type="taxonomic scope" value="Bacteria"/>
</dbReference>
<dbReference type="HOGENOM" id="CLU_065464_1_2_11"/>
<dbReference type="OrthoDB" id="9805007at2"/>
<dbReference type="Proteomes" id="UP000000806">
    <property type="component" value="Chromosome"/>
</dbReference>
<dbReference type="GO" id="GO:0022625">
    <property type="term" value="C:cytosolic large ribosomal subunit"/>
    <property type="evidence" value="ECO:0007669"/>
    <property type="project" value="TreeGrafter"/>
</dbReference>
<dbReference type="GO" id="GO:0019843">
    <property type="term" value="F:rRNA binding"/>
    <property type="evidence" value="ECO:0007669"/>
    <property type="project" value="UniProtKB-UniRule"/>
</dbReference>
<dbReference type="GO" id="GO:0003735">
    <property type="term" value="F:structural constituent of ribosome"/>
    <property type="evidence" value="ECO:0007669"/>
    <property type="project" value="InterPro"/>
</dbReference>
<dbReference type="GO" id="GO:0002181">
    <property type="term" value="P:cytoplasmic translation"/>
    <property type="evidence" value="ECO:0007669"/>
    <property type="project" value="TreeGrafter"/>
</dbReference>
<dbReference type="FunFam" id="3.90.930.12:FF:000001">
    <property type="entry name" value="50S ribosomal protein L6"/>
    <property type="match status" value="1"/>
</dbReference>
<dbReference type="FunFam" id="3.90.930.12:FF:000002">
    <property type="entry name" value="50S ribosomal protein L6"/>
    <property type="match status" value="1"/>
</dbReference>
<dbReference type="Gene3D" id="3.90.930.12">
    <property type="entry name" value="Ribosomal protein L6, alpha-beta domain"/>
    <property type="match status" value="2"/>
</dbReference>
<dbReference type="HAMAP" id="MF_01365_B">
    <property type="entry name" value="Ribosomal_uL6_B"/>
    <property type="match status" value="1"/>
</dbReference>
<dbReference type="InterPro" id="IPR000702">
    <property type="entry name" value="Ribosomal_uL6-like"/>
</dbReference>
<dbReference type="InterPro" id="IPR036789">
    <property type="entry name" value="Ribosomal_uL6-like_a/b-dom_sf"/>
</dbReference>
<dbReference type="InterPro" id="IPR020040">
    <property type="entry name" value="Ribosomal_uL6_a/b-dom"/>
</dbReference>
<dbReference type="InterPro" id="IPR019906">
    <property type="entry name" value="Ribosomal_uL6_bac-type"/>
</dbReference>
<dbReference type="InterPro" id="IPR002358">
    <property type="entry name" value="Ribosomal_uL6_CS"/>
</dbReference>
<dbReference type="NCBIfam" id="TIGR03654">
    <property type="entry name" value="L6_bact"/>
    <property type="match status" value="1"/>
</dbReference>
<dbReference type="PANTHER" id="PTHR11655">
    <property type="entry name" value="60S/50S RIBOSOMAL PROTEIN L6/L9"/>
    <property type="match status" value="1"/>
</dbReference>
<dbReference type="PANTHER" id="PTHR11655:SF14">
    <property type="entry name" value="LARGE RIBOSOMAL SUBUNIT PROTEIN UL6M"/>
    <property type="match status" value="1"/>
</dbReference>
<dbReference type="Pfam" id="PF00347">
    <property type="entry name" value="Ribosomal_L6"/>
    <property type="match status" value="2"/>
</dbReference>
<dbReference type="PIRSF" id="PIRSF002162">
    <property type="entry name" value="Ribosomal_L6"/>
    <property type="match status" value="1"/>
</dbReference>
<dbReference type="PRINTS" id="PR00059">
    <property type="entry name" value="RIBOSOMALL6"/>
</dbReference>
<dbReference type="SUPFAM" id="SSF56053">
    <property type="entry name" value="Ribosomal protein L6"/>
    <property type="match status" value="2"/>
</dbReference>
<dbReference type="PROSITE" id="PS00525">
    <property type="entry name" value="RIBOSOMAL_L6_1"/>
    <property type="match status" value="1"/>
</dbReference>
<keyword id="KW-1185">Reference proteome</keyword>
<keyword id="KW-0687">Ribonucleoprotein</keyword>
<keyword id="KW-0689">Ribosomal protein</keyword>
<keyword id="KW-0694">RNA-binding</keyword>
<keyword id="KW-0699">rRNA-binding</keyword>
<reference key="1">
    <citation type="journal article" date="2001" name="Nature">
        <title>Massive gene decay in the leprosy bacillus.</title>
        <authorList>
            <person name="Cole S.T."/>
            <person name="Eiglmeier K."/>
            <person name="Parkhill J."/>
            <person name="James K.D."/>
            <person name="Thomson N.R."/>
            <person name="Wheeler P.R."/>
            <person name="Honore N."/>
            <person name="Garnier T."/>
            <person name="Churcher C.M."/>
            <person name="Harris D.E."/>
            <person name="Mungall K.L."/>
            <person name="Basham D."/>
            <person name="Brown D."/>
            <person name="Chillingworth T."/>
            <person name="Connor R."/>
            <person name="Davies R.M."/>
            <person name="Devlin K."/>
            <person name="Duthoy S."/>
            <person name="Feltwell T."/>
            <person name="Fraser A."/>
            <person name="Hamlin N."/>
            <person name="Holroyd S."/>
            <person name="Hornsby T."/>
            <person name="Jagels K."/>
            <person name="Lacroix C."/>
            <person name="Maclean J."/>
            <person name="Moule S."/>
            <person name="Murphy L.D."/>
            <person name="Oliver K."/>
            <person name="Quail M.A."/>
            <person name="Rajandream M.A."/>
            <person name="Rutherford K.M."/>
            <person name="Rutter S."/>
            <person name="Seeger K."/>
            <person name="Simon S."/>
            <person name="Simmonds M."/>
            <person name="Skelton J."/>
            <person name="Squares R."/>
            <person name="Squares S."/>
            <person name="Stevens K."/>
            <person name="Taylor K."/>
            <person name="Whitehead S."/>
            <person name="Woodward J.R."/>
            <person name="Barrell B.G."/>
        </authorList>
    </citation>
    <scope>NUCLEOTIDE SEQUENCE [LARGE SCALE GENOMIC DNA]</scope>
    <source>
        <strain>TN</strain>
    </source>
</reference>
<feature type="chain" id="PRO_0000131060" description="Large ribosomal subunit protein uL6">
    <location>
        <begin position="1"/>
        <end position="179"/>
    </location>
</feature>
<accession>O32998</accession>
<name>RL6_MYCLE</name>
<evidence type="ECO:0000255" key="1">
    <source>
        <dbReference type="HAMAP-Rule" id="MF_01365"/>
    </source>
</evidence>
<evidence type="ECO:0000305" key="2"/>
<protein>
    <recommendedName>
        <fullName evidence="1">Large ribosomal subunit protein uL6</fullName>
    </recommendedName>
    <alternativeName>
        <fullName evidence="2">50S ribosomal protein L6</fullName>
    </alternativeName>
</protein>
<comment type="function">
    <text evidence="1">This protein binds to the 23S rRNA, and is important in its secondary structure. It is located near the subunit interface in the base of the L7/L12 stalk, and near the tRNA binding site of the peptidyltransferase center.</text>
</comment>
<comment type="subunit">
    <text evidence="1">Part of the 50S ribosomal subunit.</text>
</comment>
<comment type="similarity">
    <text evidence="1">Belongs to the universal ribosomal protein uL6 family.</text>
</comment>
<organism>
    <name type="scientific">Mycobacterium leprae (strain TN)</name>
    <dbReference type="NCBI Taxonomy" id="272631"/>
    <lineage>
        <taxon>Bacteria</taxon>
        <taxon>Bacillati</taxon>
        <taxon>Actinomycetota</taxon>
        <taxon>Actinomycetes</taxon>
        <taxon>Mycobacteriales</taxon>
        <taxon>Mycobacteriaceae</taxon>
        <taxon>Mycobacterium</taxon>
    </lineage>
</organism>
<proteinExistence type="inferred from homology"/>